<gene>
    <name evidence="1" type="primary">recR</name>
    <name type="ordered locus">CCA_00483</name>
</gene>
<reference key="1">
    <citation type="journal article" date="2003" name="Nucleic Acids Res.">
        <title>Genome sequence of Chlamydophila caviae (Chlamydia psittaci GPIC): examining the role of niche-specific genes in the evolution of the Chlamydiaceae.</title>
        <authorList>
            <person name="Read T.D."/>
            <person name="Myers G.S.A."/>
            <person name="Brunham R.C."/>
            <person name="Nelson W.C."/>
            <person name="Paulsen I.T."/>
            <person name="Heidelberg J.F."/>
            <person name="Holtzapple E.K."/>
            <person name="Khouri H.M."/>
            <person name="Federova N.B."/>
            <person name="Carty H.A."/>
            <person name="Umayam L.A."/>
            <person name="Haft D.H."/>
            <person name="Peterson J.D."/>
            <person name="Beanan M.J."/>
            <person name="White O."/>
            <person name="Salzberg S.L."/>
            <person name="Hsia R.-C."/>
            <person name="McClarty G."/>
            <person name="Rank R.G."/>
            <person name="Bavoil P.M."/>
            <person name="Fraser C.M."/>
        </authorList>
    </citation>
    <scope>NUCLEOTIDE SEQUENCE [LARGE SCALE GENOMIC DNA]</scope>
    <source>
        <strain>ATCC VR-813 / DSM 19441 / 03DC25 / GPIC</strain>
    </source>
</reference>
<sequence>MLKYPDYLSKLISLLRKLPGIGFKTAEKLAFELLDWDQDQLEAMGQAFSEVSAARSHCSTCFCLKNLPESNCEFCQNNRDTSTLCIVATPKDIFSLERSQIFKGHYYVLGTLLSPITGKHIDVERIGLLKQRIEFLKPQEIILALDATLEGDATALFLKQELAFSSASISRLALGLPIGLSFDYVDSGTLARAFSGRNPY</sequence>
<evidence type="ECO:0000255" key="1">
    <source>
        <dbReference type="HAMAP-Rule" id="MF_00017"/>
    </source>
</evidence>
<comment type="function">
    <text evidence="1">May play a role in DNA repair. It seems to be involved in an RecBC-independent recombinational process of DNA repair. It may act with RecF and RecO.</text>
</comment>
<comment type="similarity">
    <text evidence="1">Belongs to the RecR family.</text>
</comment>
<keyword id="KW-0227">DNA damage</keyword>
<keyword id="KW-0233">DNA recombination</keyword>
<keyword id="KW-0234">DNA repair</keyword>
<keyword id="KW-0479">Metal-binding</keyword>
<keyword id="KW-0862">Zinc</keyword>
<keyword id="KW-0863">Zinc-finger</keyword>
<proteinExistence type="inferred from homology"/>
<accession>Q823D7</accession>
<organism>
    <name type="scientific">Chlamydia caviae (strain ATCC VR-813 / DSM 19441 / 03DC25 / GPIC)</name>
    <name type="common">Chlamydophila caviae</name>
    <dbReference type="NCBI Taxonomy" id="227941"/>
    <lineage>
        <taxon>Bacteria</taxon>
        <taxon>Pseudomonadati</taxon>
        <taxon>Chlamydiota</taxon>
        <taxon>Chlamydiia</taxon>
        <taxon>Chlamydiales</taxon>
        <taxon>Chlamydiaceae</taxon>
        <taxon>Chlamydia/Chlamydophila group</taxon>
        <taxon>Chlamydia</taxon>
    </lineage>
</organism>
<dbReference type="EMBL" id="AE015925">
    <property type="protein sequence ID" value="AAP05227.1"/>
    <property type="molecule type" value="Genomic_DNA"/>
</dbReference>
<dbReference type="RefSeq" id="WP_011006443.1">
    <property type="nucleotide sequence ID" value="NC_003361.3"/>
</dbReference>
<dbReference type="SMR" id="Q823D7"/>
<dbReference type="STRING" id="227941.CCA_00483"/>
<dbReference type="KEGG" id="cca:CCA_00483"/>
<dbReference type="eggNOG" id="COG0353">
    <property type="taxonomic scope" value="Bacteria"/>
</dbReference>
<dbReference type="HOGENOM" id="CLU_060739_1_1_0"/>
<dbReference type="OrthoDB" id="9802672at2"/>
<dbReference type="Proteomes" id="UP000002193">
    <property type="component" value="Chromosome"/>
</dbReference>
<dbReference type="GO" id="GO:0003677">
    <property type="term" value="F:DNA binding"/>
    <property type="evidence" value="ECO:0007669"/>
    <property type="project" value="UniProtKB-UniRule"/>
</dbReference>
<dbReference type="GO" id="GO:0008270">
    <property type="term" value="F:zinc ion binding"/>
    <property type="evidence" value="ECO:0007669"/>
    <property type="project" value="UniProtKB-KW"/>
</dbReference>
<dbReference type="GO" id="GO:0006310">
    <property type="term" value="P:DNA recombination"/>
    <property type="evidence" value="ECO:0007669"/>
    <property type="project" value="UniProtKB-UniRule"/>
</dbReference>
<dbReference type="GO" id="GO:0006281">
    <property type="term" value="P:DNA repair"/>
    <property type="evidence" value="ECO:0007669"/>
    <property type="project" value="UniProtKB-UniRule"/>
</dbReference>
<dbReference type="CDD" id="cd01025">
    <property type="entry name" value="TOPRIM_recR"/>
    <property type="match status" value="1"/>
</dbReference>
<dbReference type="Gene3D" id="3.40.1360.10">
    <property type="match status" value="1"/>
</dbReference>
<dbReference type="Gene3D" id="1.10.8.420">
    <property type="entry name" value="RecR Domain 1"/>
    <property type="match status" value="1"/>
</dbReference>
<dbReference type="HAMAP" id="MF_00017">
    <property type="entry name" value="RecR"/>
    <property type="match status" value="1"/>
</dbReference>
<dbReference type="InterPro" id="IPR000093">
    <property type="entry name" value="DNA_Rcmb_RecR"/>
</dbReference>
<dbReference type="InterPro" id="IPR023627">
    <property type="entry name" value="Rcmb_RecR"/>
</dbReference>
<dbReference type="InterPro" id="IPR006171">
    <property type="entry name" value="TOPRIM_dom"/>
</dbReference>
<dbReference type="InterPro" id="IPR034137">
    <property type="entry name" value="TOPRIM_RecR"/>
</dbReference>
<dbReference type="NCBIfam" id="TIGR00615">
    <property type="entry name" value="recR"/>
    <property type="match status" value="1"/>
</dbReference>
<dbReference type="PANTHER" id="PTHR30446">
    <property type="entry name" value="RECOMBINATION PROTEIN RECR"/>
    <property type="match status" value="1"/>
</dbReference>
<dbReference type="PANTHER" id="PTHR30446:SF0">
    <property type="entry name" value="RECOMBINATION PROTEIN RECR"/>
    <property type="match status" value="1"/>
</dbReference>
<dbReference type="Pfam" id="PF21175">
    <property type="entry name" value="RecR_C"/>
    <property type="match status" value="1"/>
</dbReference>
<dbReference type="Pfam" id="PF21176">
    <property type="entry name" value="RecR_HhH"/>
    <property type="match status" value="1"/>
</dbReference>
<dbReference type="Pfam" id="PF13662">
    <property type="entry name" value="Toprim_4"/>
    <property type="match status" value="1"/>
</dbReference>
<dbReference type="SMART" id="SM00493">
    <property type="entry name" value="TOPRIM"/>
    <property type="match status" value="1"/>
</dbReference>
<dbReference type="SUPFAM" id="SSF111304">
    <property type="entry name" value="Recombination protein RecR"/>
    <property type="match status" value="1"/>
</dbReference>
<dbReference type="PROSITE" id="PS50880">
    <property type="entry name" value="TOPRIM"/>
    <property type="match status" value="1"/>
</dbReference>
<feature type="chain" id="PRO_0000190302" description="Recombination protein RecR">
    <location>
        <begin position="1"/>
        <end position="200"/>
    </location>
</feature>
<feature type="domain" description="Toprim" evidence="1">
    <location>
        <begin position="82"/>
        <end position="177"/>
    </location>
</feature>
<feature type="zinc finger region" description="C4-type" evidence="1">
    <location>
        <begin position="58"/>
        <end position="75"/>
    </location>
</feature>
<name>RECR_CHLCV</name>
<protein>
    <recommendedName>
        <fullName evidence="1">Recombination protein RecR</fullName>
    </recommendedName>
</protein>